<name>MATRX_NIPAV</name>
<reference key="1">
    <citation type="journal article" date="2000" name="Science">
        <title>Nipah virus: a recently emergent deadly paramyxovirus.</title>
        <authorList>
            <person name="Chua K.B."/>
            <person name="Bellini W.J."/>
            <person name="Rota P.A."/>
            <person name="Harcourt B.H."/>
            <person name="Tamin A."/>
            <person name="Lam S.K."/>
            <person name="Ksiazek T.G."/>
            <person name="Rollin P.E."/>
            <person name="Zaki S.R."/>
            <person name="Shieh W."/>
            <person name="Goldsmith C.S."/>
            <person name="Gubler D.J."/>
            <person name="Roehrig J.T."/>
            <person name="Eaton B."/>
            <person name="Gould A.R."/>
            <person name="Olson J."/>
            <person name="Field H."/>
            <person name="Daniels P."/>
            <person name="Ling A.E."/>
            <person name="Peters C.J."/>
            <person name="Anderson L.J."/>
            <person name="Mahy B.W."/>
        </authorList>
    </citation>
    <scope>NUCLEOTIDE SEQUENCE [GENOMIC RNA]</scope>
</reference>
<reference key="2">
    <citation type="journal article" date="2001" name="Virology">
        <title>Molecular characterization of the polymerase gene and genomic termini of Nipah virus.</title>
        <authorList>
            <person name="Harcourt B.H."/>
            <person name="Tamin A."/>
            <person name="Halpin K."/>
            <person name="Ksiazek T.G."/>
            <person name="Rollin P.E."/>
            <person name="Bellini W.J."/>
            <person name="Rota P.A."/>
        </authorList>
    </citation>
    <scope>NUCLEOTIDE SEQUENCE [GENOMIC RNA]</scope>
</reference>
<reference key="3">
    <citation type="journal article" date="2001" name="J. Gen. Virol.">
        <title>Complete nucleotide sequences of Nipah virus isolates from Malaysia.</title>
        <authorList>
            <person name="Chan Y.P."/>
            <person name="Chua K.B."/>
            <person name="Koh C.L."/>
            <person name="Lim M.E."/>
            <person name="Lam S.K."/>
        </authorList>
    </citation>
    <scope>NUCLEOTIDE SEQUENCE [GENOMIC RNA]</scope>
    <source>
        <strain>Isolate UMMC1</strain>
        <strain>Isolate UMMC2</strain>
    </source>
</reference>
<reference key="4">
    <citation type="journal article" date="2002" name="Microbes Infect.">
        <title>Isolation of Nipah virus from Malaysian island flying-foxes.</title>
        <authorList>
            <person name="Chua K.B."/>
            <person name="Koh C.L."/>
            <person name="Hooi P.S."/>
            <person name="Wee K.F."/>
            <person name="Khong J.H."/>
            <person name="Chua B.H."/>
            <person name="Chan Y.P."/>
            <person name="Lim M.E."/>
            <person name="Lam S.K."/>
        </authorList>
    </citation>
    <scope>NUCLEOTIDE SEQUENCE [GENOMIC RNA]</scope>
</reference>
<reference key="5">
    <citation type="journal article" date="2004" name="Emerg. Infect. Dis.">
        <title>Isolation and molecular identification of Nipah virus from pigs.</title>
        <authorList>
            <person name="Abubakar S."/>
            <person name="Chang L.Y."/>
            <person name="Mohdali A.R."/>
            <person name="Sharifah S.H."/>
            <person name="Yusoff K."/>
            <person name="Zamrod Z."/>
        </authorList>
    </citation>
    <scope>NUCLEOTIDE SEQUENCE [GENOMIC RNA]</scope>
    <source>
        <strain>Isolate NiV/MY/99/UM-0128</strain>
        <strain>Isolate NiV/MY/99/VRI-1413</strain>
        <strain>Isolate NiV/MY/99/VRI-2794</strain>
    </source>
</reference>
<reference key="6">
    <citation type="submission" date="2005-01" db="EMBL/GenBank/DDBJ databases">
        <title>Identification of a new Nipah virus strain from pigs.</title>
        <authorList>
            <person name="Abubakar S."/>
            <person name="Li-Yen C."/>
            <person name="Mohdali A.R."/>
            <person name="Sharifah S.H."/>
        </authorList>
    </citation>
    <scope>NUCLEOTIDE SEQUENCE [GENOMIC RNA]</scope>
    <source>
        <strain>Isolate NiV/MY/99/VRI-0626</strain>
    </source>
</reference>
<reference key="7">
    <citation type="journal article" date="2006" name="J. Virol.">
        <title>Mutation of YMYL in the Nipah virus matrix protein abrogates budding and alters subcellular localization.</title>
        <authorList>
            <person name="Ciancanelli M.J."/>
            <person name="Basler C.F."/>
        </authorList>
    </citation>
    <scope>FUNCTION</scope>
    <scope>SUBCELLULAR LOCATION</scope>
    <scope>SUBUNIT</scope>
    <scope>MUTAGENESIS OF TYR-62</scope>
</reference>
<reference key="8">
    <citation type="journal article" date="2007" name="Virol. J.">
        <title>Quantitative analysis of Nipah virus proteins released as virus-like particles reveals central role for the matrix protein.</title>
        <authorList>
            <person name="Patch J.R."/>
            <person name="Crameri G."/>
            <person name="Wang L.F."/>
            <person name="Eaton B.T."/>
            <person name="Broder C.C."/>
        </authorList>
    </citation>
    <scope>FUNCTION</scope>
</reference>
<reference key="9">
    <citation type="journal article" date="2008" name="Virol. J.">
        <title>The YPLGVG sequence of the Nipah virus matrix protein is required for budding.</title>
        <authorList>
            <person name="Patch J.R."/>
            <person name="Han Z."/>
            <person name="McCarthy S.E."/>
            <person name="Yan L."/>
            <person name="Wang L.F."/>
            <person name="Harty R.N."/>
            <person name="Broder C.C."/>
        </authorList>
    </citation>
    <scope>FUNCTION</scope>
    <scope>MUTAGENESIS OF TYR-92; PRO-93 AND LEU-94</scope>
    <scope>SUBCELLULAR LOCATION</scope>
</reference>
<reference key="10">
    <citation type="journal article" date="2010" name="PLoS Pathog.">
        <title>Ubiquitin-regulated nuclear-cytoplasmic trafficking of the Nipah virus matrix protein is important for viral budding.</title>
        <authorList>
            <person name="Wang Y.E."/>
            <person name="Park A."/>
            <person name="Lake M."/>
            <person name="Pentecost M."/>
            <person name="Torres B."/>
            <person name="Yun T.E."/>
            <person name="Wolf M.C."/>
            <person name="Holbrook M.R."/>
            <person name="Freiberg A.N."/>
            <person name="Lee B."/>
        </authorList>
    </citation>
    <scope>FUNCTION</scope>
    <scope>SUBCELLULAR LOCATION</scope>
    <scope>UBIQUITINATION</scope>
    <scope>MUTAGENESIS OF LYS-258</scope>
    <scope>MOTIF</scope>
</reference>
<reference key="11">
    <citation type="journal article" date="2016" name="PLoS Pathog.">
        <title>The Matrix Protein of Nipah Virus Targets the E3-Ubiquitin Ligase TRIM6 to Inhibit the IKKepsilon Kinase-Mediated Type-I IFN Antiviral Response.</title>
        <authorList>
            <person name="Bharaj P."/>
            <person name="Wang Y.E."/>
            <person name="Dawes B.E."/>
            <person name="Yun T.E."/>
            <person name="Park A."/>
            <person name="Yen B."/>
            <person name="Basler C.F."/>
            <person name="Freiberg A.N."/>
            <person name="Lee B."/>
            <person name="Rajsbaum R."/>
        </authorList>
    </citation>
    <scope>INTERACTION WITH HOST TRIM6</scope>
    <scope>FUNCTION</scope>
</reference>
<reference key="12">
    <citation type="journal article" date="2017" name="J. Virol.">
        <title>Cytoplasmic Motifs in the Nipah Virus Fusion Protein Modulate Virus Particle Assembly and Egress.</title>
        <authorList>
            <person name="Johnston G.P."/>
            <person name="Contreras E.M."/>
            <person name="Dabundo J."/>
            <person name="Henderson B.A."/>
            <person name="Matz K.M."/>
            <person name="Ortega V."/>
            <person name="Ramirez A."/>
            <person name="Park A."/>
            <person name="Aguilar H.C."/>
        </authorList>
    </citation>
    <scope>FUNCTION</scope>
</reference>
<keyword id="KW-0002">3D-structure</keyword>
<keyword id="KW-1032">Host cell membrane</keyword>
<keyword id="KW-1035">Host cytoplasm</keyword>
<keyword id="KW-1043">Host membrane</keyword>
<keyword id="KW-1048">Host nucleus</keyword>
<keyword id="KW-0945">Host-virus interaction</keyword>
<keyword id="KW-0472">Membrane</keyword>
<keyword id="KW-0832">Ubl conjugation</keyword>
<keyword id="KW-0468">Viral matrix protein</keyword>
<keyword id="KW-0946">Virion</keyword>
<gene>
    <name type="primary">M</name>
</gene>
<sequence length="352" mass="39928">MEPDIKSISSESMEGVSDFSPSSWEHGGYLDKVEPEIDENGSMIPKYKIYTPGANERKYNNYMYLICYGFVEDVERTPETGKRKKIRTIAAYPLGVGKSASHPQDLLEELCSLKVTVRRTAGSTEKIVFGSSGPLNHLVPWKKVLTSGSIFNAVKVCRNVDQIQLDKHQALRIFFLSITKLNDSGIYMIPRTMLEFRRNNAIAFNLLVYLKIDADLSKMGIQGSLDKDGFKVASFMLHLGNFVRRAGKYYSVDYCRRKIDRMKLQFSLGSIGGLSLHIKINGVISKRLFAQMGFQKNLCFSLMDINPWLNRLTWNNSCEISRVAAVLQPSIPREFMIYDDVFIDNTGRILKG</sequence>
<feature type="chain" id="PRO_0000236001" description="Matrix protein">
    <location>
        <begin position="1"/>
        <end position="352"/>
    </location>
</feature>
<feature type="region of interest" description="Disordered" evidence="2">
    <location>
        <begin position="1"/>
        <end position="22"/>
    </location>
</feature>
<feature type="short sequence motif" description="Nuclear export signal 1" evidence="6">
    <location>
        <begin position="106"/>
        <end position="115"/>
    </location>
</feature>
<feature type="short sequence motif" description="Nuclear localization signal" evidence="6">
    <location>
        <begin position="244"/>
        <end position="258"/>
    </location>
</feature>
<feature type="short sequence motif" description="Nuclear export signal 2" evidence="6">
    <location>
        <begin position="268"/>
        <end position="276"/>
    </location>
</feature>
<feature type="sequence variant" description="In strain: Isolate NiV/MY/99/VRI-0626.">
    <original>S</original>
    <variation>G</variation>
    <location>
        <position position="147"/>
    </location>
</feature>
<feature type="mutagenesis site" description="Complete loss of budding." evidence="3">
    <original>Y</original>
    <variation>A</variation>
    <location>
        <position position="62"/>
    </location>
</feature>
<feature type="mutagenesis site" description="Complete loss of budding." evidence="3">
    <original>Y</original>
    <variation>A</variation>
    <location>
        <position position="92"/>
    </location>
</feature>
<feature type="mutagenesis site" description="Complete loss of budding." evidence="3">
    <original>P</original>
    <variation>A</variation>
    <location>
        <position position="93"/>
    </location>
</feature>
<feature type="mutagenesis site" description="Complete loss of budding." evidence="3">
    <original>L</original>
    <variation>A</variation>
    <location>
        <position position="94"/>
    </location>
</feature>
<feature type="mutagenesis site" description="Complete loss of membrane association and budding." evidence="6">
    <original>K</original>
    <variation>A</variation>
    <location>
        <position position="258"/>
    </location>
</feature>
<feature type="mutagenesis site" description="Complete loss of membrane association and budding." evidence="6">
    <original>K</original>
    <variation>R</variation>
    <location>
        <position position="258"/>
    </location>
</feature>
<feature type="helix" evidence="11">
    <location>
        <begin position="22"/>
        <end position="25"/>
    </location>
</feature>
<feature type="strand" evidence="10">
    <location>
        <begin position="46"/>
        <end position="50"/>
    </location>
</feature>
<feature type="strand" evidence="10">
    <location>
        <begin position="62"/>
        <end position="73"/>
    </location>
</feature>
<feature type="strand" evidence="10">
    <location>
        <begin position="86"/>
        <end position="98"/>
    </location>
</feature>
<feature type="helix" evidence="10">
    <location>
        <begin position="103"/>
        <end position="112"/>
    </location>
</feature>
<feature type="strand" evidence="10">
    <location>
        <begin position="115"/>
        <end position="129"/>
    </location>
</feature>
<feature type="helix" evidence="10">
    <location>
        <begin position="139"/>
        <end position="141"/>
    </location>
</feature>
<feature type="helix" evidence="10">
    <location>
        <begin position="142"/>
        <end position="145"/>
    </location>
</feature>
<feature type="strand" evidence="10">
    <location>
        <begin position="149"/>
        <end position="152"/>
    </location>
</feature>
<feature type="helix" evidence="10">
    <location>
        <begin position="153"/>
        <end position="156"/>
    </location>
</feature>
<feature type="helix" evidence="10">
    <location>
        <begin position="160"/>
        <end position="162"/>
    </location>
</feature>
<feature type="strand" evidence="10">
    <location>
        <begin position="165"/>
        <end position="167"/>
    </location>
</feature>
<feature type="strand" evidence="10">
    <location>
        <begin position="169"/>
        <end position="181"/>
    </location>
</feature>
<feature type="strand" evidence="11">
    <location>
        <begin position="185"/>
        <end position="188"/>
    </location>
</feature>
<feature type="helix" evidence="10">
    <location>
        <begin position="191"/>
        <end position="194"/>
    </location>
</feature>
<feature type="strand" evidence="10">
    <location>
        <begin position="201"/>
        <end position="212"/>
    </location>
</feature>
<feature type="helix" evidence="10">
    <location>
        <begin position="216"/>
        <end position="218"/>
    </location>
</feature>
<feature type="strand" evidence="10">
    <location>
        <begin position="232"/>
        <end position="243"/>
    </location>
</feature>
<feature type="helix" evidence="10">
    <location>
        <begin position="252"/>
        <end position="262"/>
    </location>
</feature>
<feature type="strand" evidence="10">
    <location>
        <begin position="264"/>
        <end position="269"/>
    </location>
</feature>
<feature type="strand" evidence="10">
    <location>
        <begin position="273"/>
        <end position="280"/>
    </location>
</feature>
<feature type="helix" evidence="10">
    <location>
        <begin position="286"/>
        <end position="291"/>
    </location>
</feature>
<feature type="turn" evidence="10">
    <location>
        <begin position="292"/>
        <end position="294"/>
    </location>
</feature>
<feature type="strand" evidence="10">
    <location>
        <begin position="296"/>
        <end position="301"/>
    </location>
</feature>
<feature type="helix" evidence="10">
    <location>
        <begin position="302"/>
        <end position="305"/>
    </location>
</feature>
<feature type="helix" evidence="10">
    <location>
        <begin position="307"/>
        <end position="313"/>
    </location>
</feature>
<feature type="strand" evidence="10">
    <location>
        <begin position="318"/>
        <end position="331"/>
    </location>
</feature>
<feature type="helix" evidence="10">
    <location>
        <begin position="332"/>
        <end position="336"/>
    </location>
</feature>
<feature type="strand" evidence="10">
    <location>
        <begin position="341"/>
        <end position="343"/>
    </location>
</feature>
<feature type="strand" evidence="10">
    <location>
        <begin position="347"/>
        <end position="349"/>
    </location>
</feature>
<proteinExistence type="evidence at protein level"/>
<dbReference type="EMBL" id="AF212302">
    <property type="protein sequence ID" value="AAF73379.1"/>
    <property type="molecule type" value="Genomic_RNA"/>
</dbReference>
<dbReference type="EMBL" id="AY029767">
    <property type="protein sequence ID" value="AAK50543.1"/>
    <property type="molecule type" value="Genomic_RNA"/>
</dbReference>
<dbReference type="EMBL" id="AY029768">
    <property type="protein sequence ID" value="AAK50552.1"/>
    <property type="molecule type" value="Genomic_RNA"/>
</dbReference>
<dbReference type="EMBL" id="AF376747">
    <property type="protein sequence ID" value="AAM13404.1"/>
    <property type="molecule type" value="Genomic_RNA"/>
</dbReference>
<dbReference type="EMBL" id="AJ564621">
    <property type="protein sequence ID" value="CAD92349.1"/>
    <property type="molecule type" value="Genomic_RNA"/>
</dbReference>
<dbReference type="EMBL" id="AJ564622">
    <property type="protein sequence ID" value="CAD92355.1"/>
    <property type="molecule type" value="Genomic_RNA"/>
</dbReference>
<dbReference type="EMBL" id="AJ564623">
    <property type="protein sequence ID" value="CAD92361.1"/>
    <property type="molecule type" value="Genomic_RNA"/>
</dbReference>
<dbReference type="EMBL" id="AJ627196">
    <property type="protein sequence ID" value="CAF25495.1"/>
    <property type="molecule type" value="Genomic_RNA"/>
</dbReference>
<dbReference type="RefSeq" id="NP_112025.1">
    <property type="nucleotide sequence ID" value="NC_002728.1"/>
</dbReference>
<dbReference type="PDB" id="7SKT">
    <property type="method" value="X-ray"/>
    <property type="resolution" value="2.05 A"/>
    <property type="chains" value="A/B=2-352"/>
</dbReference>
<dbReference type="PDB" id="7SKU">
    <property type="method" value="X-ray"/>
    <property type="resolution" value="2.12 A"/>
    <property type="chains" value="A/B=2-352"/>
</dbReference>
<dbReference type="PDBsum" id="7SKT"/>
<dbReference type="PDBsum" id="7SKU"/>
<dbReference type="SMR" id="Q9IK90"/>
<dbReference type="IntAct" id="Q9IK90">
    <property type="interactions" value="20"/>
</dbReference>
<dbReference type="MINT" id="Q9IK90"/>
<dbReference type="GeneID" id="920953"/>
<dbReference type="KEGG" id="vg:920953"/>
<dbReference type="OrthoDB" id="5228at10239"/>
<dbReference type="Proteomes" id="UP000002330">
    <property type="component" value="Segment"/>
</dbReference>
<dbReference type="Proteomes" id="UP000007527">
    <property type="component" value="Segment"/>
</dbReference>
<dbReference type="Proteomes" id="UP000008676">
    <property type="component" value="Segment"/>
</dbReference>
<dbReference type="Proteomes" id="UP000100567">
    <property type="component" value="Segment"/>
</dbReference>
<dbReference type="Proteomes" id="UP000110983">
    <property type="component" value="Segment"/>
</dbReference>
<dbReference type="Proteomes" id="UP000130871">
    <property type="component" value="Segment"/>
</dbReference>
<dbReference type="Proteomes" id="UP000170143">
    <property type="component" value="Segment"/>
</dbReference>
<dbReference type="GO" id="GO:0030430">
    <property type="term" value="C:host cell cytoplasm"/>
    <property type="evidence" value="ECO:0007669"/>
    <property type="project" value="UniProtKB-SubCell"/>
</dbReference>
<dbReference type="GO" id="GO:0042025">
    <property type="term" value="C:host cell nucleus"/>
    <property type="evidence" value="ECO:0007669"/>
    <property type="project" value="UniProtKB-SubCell"/>
</dbReference>
<dbReference type="GO" id="GO:0020002">
    <property type="term" value="C:host cell plasma membrane"/>
    <property type="evidence" value="ECO:0007669"/>
    <property type="project" value="UniProtKB-SubCell"/>
</dbReference>
<dbReference type="GO" id="GO:0016020">
    <property type="term" value="C:membrane"/>
    <property type="evidence" value="ECO:0007669"/>
    <property type="project" value="UniProtKB-KW"/>
</dbReference>
<dbReference type="GO" id="GO:0044423">
    <property type="term" value="C:virion component"/>
    <property type="evidence" value="ECO:0007669"/>
    <property type="project" value="UniProtKB-KW"/>
</dbReference>
<dbReference type="GO" id="GO:0039660">
    <property type="term" value="F:structural constituent of virion"/>
    <property type="evidence" value="ECO:0007669"/>
    <property type="project" value="UniProtKB-KW"/>
</dbReference>
<dbReference type="GO" id="GO:0019068">
    <property type="term" value="P:virion assembly"/>
    <property type="evidence" value="ECO:0007669"/>
    <property type="project" value="InterPro"/>
</dbReference>
<dbReference type="Gene3D" id="2.70.20.60">
    <property type="entry name" value="Viral matrix protein, C-terminal domain"/>
    <property type="match status" value="1"/>
</dbReference>
<dbReference type="Gene3D" id="2.70.20.50">
    <property type="entry name" value="Viral matrix protein, N-terminal domain"/>
    <property type="match status" value="1"/>
</dbReference>
<dbReference type="InterPro" id="IPR042539">
    <property type="entry name" value="Matrix_C"/>
</dbReference>
<dbReference type="InterPro" id="IPR042540">
    <property type="entry name" value="Matrix_N"/>
</dbReference>
<dbReference type="InterPro" id="IPR055413">
    <property type="entry name" value="Matrix_Paramyxo_C"/>
</dbReference>
<dbReference type="InterPro" id="IPR000982">
    <property type="entry name" value="Matrix_Paramyxo_N"/>
</dbReference>
<dbReference type="Pfam" id="PF23765">
    <property type="entry name" value="Matrix_Paramyxo_C"/>
    <property type="match status" value="1"/>
</dbReference>
<dbReference type="Pfam" id="PF00661">
    <property type="entry name" value="Matrix_Paramyxo_N"/>
    <property type="match status" value="1"/>
</dbReference>
<accession>Q9IK90</accession>
<accession>Q5K4E0</accession>
<organismHost>
    <name type="scientific">Cynopterus brachyotis</name>
    <name type="common">Lesser short-nosed fruit bat</name>
    <name type="synonym">Pachysoma brachyotis</name>
    <dbReference type="NCBI Taxonomy" id="58060"/>
</organismHost>
<organismHost>
    <name type="scientific">Eonycteris spelaea</name>
    <name type="common">Lesser dawn bat</name>
    <name type="synonym">Macroglossus spelaeus</name>
    <dbReference type="NCBI Taxonomy" id="58065"/>
</organismHost>
<organismHost>
    <name type="scientific">Homo sapiens</name>
    <name type="common">Human</name>
    <dbReference type="NCBI Taxonomy" id="9606"/>
</organismHost>
<organismHost>
    <name type="scientific">Pteropus hypomelanus</name>
    <name type="common">Island flying fox</name>
    <name type="synonym">Variable flying fox</name>
    <dbReference type="NCBI Taxonomy" id="9405"/>
</organismHost>
<organismHost>
    <name type="scientific">Pteropus vampyrus</name>
    <name type="common">Large flying fox</name>
    <dbReference type="NCBI Taxonomy" id="132908"/>
</organismHost>
<organismHost>
    <name type="scientific">Scotophilus kuhlii</name>
    <name type="common">Lesser asiatic yellow bat</name>
    <dbReference type="NCBI Taxonomy" id="153297"/>
</organismHost>
<organismHost>
    <name type="scientific">Sus scrofa</name>
    <name type="common">Pig</name>
    <dbReference type="NCBI Taxonomy" id="9823"/>
</organismHost>
<evidence type="ECO:0000250" key="1"/>
<evidence type="ECO:0000256" key="2">
    <source>
        <dbReference type="SAM" id="MobiDB-lite"/>
    </source>
</evidence>
<evidence type="ECO:0000269" key="3">
    <source>
    </source>
</evidence>
<evidence type="ECO:0000269" key="4">
    <source>
    </source>
</evidence>
<evidence type="ECO:0000269" key="5">
    <source>
    </source>
</evidence>
<evidence type="ECO:0000269" key="6">
    <source>
    </source>
</evidence>
<evidence type="ECO:0000269" key="7">
    <source>
    </source>
</evidence>
<evidence type="ECO:0000269" key="8">
    <source>
    </source>
</evidence>
<evidence type="ECO:0000305" key="9"/>
<evidence type="ECO:0007829" key="10">
    <source>
        <dbReference type="PDB" id="7SKT"/>
    </source>
</evidence>
<evidence type="ECO:0007829" key="11">
    <source>
        <dbReference type="PDB" id="7SKU"/>
    </source>
</evidence>
<comment type="function">
    <text evidence="1 3 4 5 6 7 8">Plays a crucial role in virion assembly and budding. Forms a shell at the inner face of the plasma membrane (PubMed:17005661, PubMed:17204159, PubMed:19000317). Transits through the host nucleus before gaining the functional ability to localize and bud from the plasma membrane (PubMed:21085610). Mediates together with fusion protein the incorporation of the glycoprotein to the viral particles (PubMed:28250132). Also participates in the inhibition of the host interferon type I antiviral response by interacting with and thereby inhibiting host TRIM6 (PubMed:27622505).</text>
</comment>
<comment type="subunit">
    <text evidence="1 3 7">Homomultimer (PubMed:17005661). Interacts with host TRIM6; this interaction inhibits the IKBKE-dependent activation of the type I interferon signaling pathway (PubMed:27622505). Interacts with host ANP32B; this interaction promotes M nuclear localization (By similarity).</text>
</comment>
<comment type="interaction">
    <interactant intactId="EBI-25747115">
        <id>Q9IK90</id>
    </interactant>
    <interactant intactId="EBI-395506">
        <id>Q9UPY3</id>
        <label>DICER1</label>
    </interactant>
    <organismsDiffer>true</organismsDiffer>
    <experiments>3</experiments>
</comment>
<comment type="subcellular location">
    <subcellularLocation>
        <location>Virion</location>
    </subcellularLocation>
    <subcellularLocation>
        <location>Host cytoplasm</location>
    </subcellularLocation>
    <subcellularLocation>
        <location evidence="3 5 6">Host cell membrane</location>
    </subcellularLocation>
    <subcellularLocation>
        <location evidence="6">Host nucleus</location>
    </subcellularLocation>
    <text evidence="6">During bud formation, associates at the inner side of the plasma membrane of infected cells. Nuclear-cytoplasmic trafficking is essential for budding and requires matrix ubiquitination.</text>
</comment>
<comment type="PTM">
    <text evidence="6">Ubiquitinated; regulates matrix nuclear export.</text>
</comment>
<comment type="similarity">
    <text evidence="9">Belongs to the morbillivirus/respirovirus/rubulavirus M protein family.</text>
</comment>
<organism>
    <name type="scientific">Nipah virus</name>
    <dbReference type="NCBI Taxonomy" id="3052225"/>
    <lineage>
        <taxon>Viruses</taxon>
        <taxon>Riboviria</taxon>
        <taxon>Orthornavirae</taxon>
        <taxon>Negarnaviricota</taxon>
        <taxon>Haploviricotina</taxon>
        <taxon>Monjiviricetes</taxon>
        <taxon>Mononegavirales</taxon>
        <taxon>Paramyxoviridae</taxon>
        <taxon>Orthoparamyxovirinae</taxon>
        <taxon>Henipavirus</taxon>
    </lineage>
</organism>
<protein>
    <recommendedName>
        <fullName>Matrix protein</fullName>
        <shortName>Protein M</shortName>
    </recommendedName>
</protein>